<name>RPP21_HUMAN</name>
<reference key="1">
    <citation type="journal article" date="2001" name="RNA">
        <title>Function and subnuclear distribution of Rpp21, a protein subunit of the human ribonucleoprotein ribonuclease P.</title>
        <authorList>
            <person name="Jarrous N."/>
            <person name="Reiner R."/>
            <person name="Wesolowski D."/>
            <person name="Mann H."/>
            <person name="Guerrier-Takada C."/>
            <person name="Altman S."/>
        </authorList>
    </citation>
    <scope>NUCLEOTIDE SEQUENCE [MRNA] (ISOFORM 1)</scope>
    <scope>SUBCELLULAR LOCATION</scope>
</reference>
<reference key="2">
    <citation type="submission" date="2002-08" db="EMBL/GenBank/DDBJ databases">
        <title>Genes from major histocompatibility complex (MHC) class I region from HLA-C to HLA-A.</title>
        <authorList>
            <person name="Raha-Chowdhury R."/>
            <person name="Andrews S.R."/>
            <person name="Gruen J.R."/>
            <person name="Weissman S.M."/>
        </authorList>
    </citation>
    <scope>NUCLEOTIDE SEQUENCE [MRNA] (ISOFORMS 1; 2 AND 3)</scope>
    <scope>VARIANT HIS-77</scope>
    <source>
        <tissue>Spleen</tissue>
    </source>
</reference>
<reference key="3">
    <citation type="journal article" date="2004" name="Nat. Genet.">
        <title>Complete sequencing and characterization of 21,243 full-length human cDNAs.</title>
        <authorList>
            <person name="Ota T."/>
            <person name="Suzuki Y."/>
            <person name="Nishikawa T."/>
            <person name="Otsuki T."/>
            <person name="Sugiyama T."/>
            <person name="Irie R."/>
            <person name="Wakamatsu A."/>
            <person name="Hayashi K."/>
            <person name="Sato H."/>
            <person name="Nagai K."/>
            <person name="Kimura K."/>
            <person name="Makita H."/>
            <person name="Sekine M."/>
            <person name="Obayashi M."/>
            <person name="Nishi T."/>
            <person name="Shibahara T."/>
            <person name="Tanaka T."/>
            <person name="Ishii S."/>
            <person name="Yamamoto J."/>
            <person name="Saito K."/>
            <person name="Kawai Y."/>
            <person name="Isono Y."/>
            <person name="Nakamura Y."/>
            <person name="Nagahari K."/>
            <person name="Murakami K."/>
            <person name="Yasuda T."/>
            <person name="Iwayanagi T."/>
            <person name="Wagatsuma M."/>
            <person name="Shiratori A."/>
            <person name="Sudo H."/>
            <person name="Hosoiri T."/>
            <person name="Kaku Y."/>
            <person name="Kodaira H."/>
            <person name="Kondo H."/>
            <person name="Sugawara M."/>
            <person name="Takahashi M."/>
            <person name="Kanda K."/>
            <person name="Yokoi T."/>
            <person name="Furuya T."/>
            <person name="Kikkawa E."/>
            <person name="Omura Y."/>
            <person name="Abe K."/>
            <person name="Kamihara K."/>
            <person name="Katsuta N."/>
            <person name="Sato K."/>
            <person name="Tanikawa M."/>
            <person name="Yamazaki M."/>
            <person name="Ninomiya K."/>
            <person name="Ishibashi T."/>
            <person name="Yamashita H."/>
            <person name="Murakawa K."/>
            <person name="Fujimori K."/>
            <person name="Tanai H."/>
            <person name="Kimata M."/>
            <person name="Watanabe M."/>
            <person name="Hiraoka S."/>
            <person name="Chiba Y."/>
            <person name="Ishida S."/>
            <person name="Ono Y."/>
            <person name="Takiguchi S."/>
            <person name="Watanabe S."/>
            <person name="Yosida M."/>
            <person name="Hotuta T."/>
            <person name="Kusano J."/>
            <person name="Kanehori K."/>
            <person name="Takahashi-Fujii A."/>
            <person name="Hara H."/>
            <person name="Tanase T.-O."/>
            <person name="Nomura Y."/>
            <person name="Togiya S."/>
            <person name="Komai F."/>
            <person name="Hara R."/>
            <person name="Takeuchi K."/>
            <person name="Arita M."/>
            <person name="Imose N."/>
            <person name="Musashino K."/>
            <person name="Yuuki H."/>
            <person name="Oshima A."/>
            <person name="Sasaki N."/>
            <person name="Aotsuka S."/>
            <person name="Yoshikawa Y."/>
            <person name="Matsunawa H."/>
            <person name="Ichihara T."/>
            <person name="Shiohata N."/>
            <person name="Sano S."/>
            <person name="Moriya S."/>
            <person name="Momiyama H."/>
            <person name="Satoh N."/>
            <person name="Takami S."/>
            <person name="Terashima Y."/>
            <person name="Suzuki O."/>
            <person name="Nakagawa S."/>
            <person name="Senoh A."/>
            <person name="Mizoguchi H."/>
            <person name="Goto Y."/>
            <person name="Shimizu F."/>
            <person name="Wakebe H."/>
            <person name="Hishigaki H."/>
            <person name="Watanabe T."/>
            <person name="Sugiyama A."/>
            <person name="Takemoto M."/>
            <person name="Kawakami B."/>
            <person name="Yamazaki M."/>
            <person name="Watanabe K."/>
            <person name="Kumagai A."/>
            <person name="Itakura S."/>
            <person name="Fukuzumi Y."/>
            <person name="Fujimori Y."/>
            <person name="Komiyama M."/>
            <person name="Tashiro H."/>
            <person name="Tanigami A."/>
            <person name="Fujiwara T."/>
            <person name="Ono T."/>
            <person name="Yamada K."/>
            <person name="Fujii Y."/>
            <person name="Ozaki K."/>
            <person name="Hirao M."/>
            <person name="Ohmori Y."/>
            <person name="Kawabata A."/>
            <person name="Hikiji T."/>
            <person name="Kobatake N."/>
            <person name="Inagaki H."/>
            <person name="Ikema Y."/>
            <person name="Okamoto S."/>
            <person name="Okitani R."/>
            <person name="Kawakami T."/>
            <person name="Noguchi S."/>
            <person name="Itoh T."/>
            <person name="Shigeta K."/>
            <person name="Senba T."/>
            <person name="Matsumura K."/>
            <person name="Nakajima Y."/>
            <person name="Mizuno T."/>
            <person name="Morinaga M."/>
            <person name="Sasaki M."/>
            <person name="Togashi T."/>
            <person name="Oyama M."/>
            <person name="Hata H."/>
            <person name="Watanabe M."/>
            <person name="Komatsu T."/>
            <person name="Mizushima-Sugano J."/>
            <person name="Satoh T."/>
            <person name="Shirai Y."/>
            <person name="Takahashi Y."/>
            <person name="Nakagawa K."/>
            <person name="Okumura K."/>
            <person name="Nagase T."/>
            <person name="Nomura N."/>
            <person name="Kikuchi H."/>
            <person name="Masuho Y."/>
            <person name="Yamashita R."/>
            <person name="Nakai K."/>
            <person name="Yada T."/>
            <person name="Nakamura Y."/>
            <person name="Ohara O."/>
            <person name="Isogai T."/>
            <person name="Sugano S."/>
        </authorList>
    </citation>
    <scope>NUCLEOTIDE SEQUENCE [LARGE SCALE MRNA] (ISOFORM 1)</scope>
    <source>
        <tissue>Small intestine</tissue>
    </source>
</reference>
<reference key="4">
    <citation type="journal article" date="2003" name="Nature">
        <title>The DNA sequence and analysis of human chromosome 6.</title>
        <authorList>
            <person name="Mungall A.J."/>
            <person name="Palmer S.A."/>
            <person name="Sims S.K."/>
            <person name="Edwards C.A."/>
            <person name="Ashurst J.L."/>
            <person name="Wilming L."/>
            <person name="Jones M.C."/>
            <person name="Horton R."/>
            <person name="Hunt S.E."/>
            <person name="Scott C.E."/>
            <person name="Gilbert J.G.R."/>
            <person name="Clamp M.E."/>
            <person name="Bethel G."/>
            <person name="Milne S."/>
            <person name="Ainscough R."/>
            <person name="Almeida J.P."/>
            <person name="Ambrose K.D."/>
            <person name="Andrews T.D."/>
            <person name="Ashwell R.I.S."/>
            <person name="Babbage A.K."/>
            <person name="Bagguley C.L."/>
            <person name="Bailey J."/>
            <person name="Banerjee R."/>
            <person name="Barker D.J."/>
            <person name="Barlow K.F."/>
            <person name="Bates K."/>
            <person name="Beare D.M."/>
            <person name="Beasley H."/>
            <person name="Beasley O."/>
            <person name="Bird C.P."/>
            <person name="Blakey S.E."/>
            <person name="Bray-Allen S."/>
            <person name="Brook J."/>
            <person name="Brown A.J."/>
            <person name="Brown J.Y."/>
            <person name="Burford D.C."/>
            <person name="Burrill W."/>
            <person name="Burton J."/>
            <person name="Carder C."/>
            <person name="Carter N.P."/>
            <person name="Chapman J.C."/>
            <person name="Clark S.Y."/>
            <person name="Clark G."/>
            <person name="Clee C.M."/>
            <person name="Clegg S."/>
            <person name="Cobley V."/>
            <person name="Collier R.E."/>
            <person name="Collins J.E."/>
            <person name="Colman L.K."/>
            <person name="Corby N.R."/>
            <person name="Coville G.J."/>
            <person name="Culley K.M."/>
            <person name="Dhami P."/>
            <person name="Davies J."/>
            <person name="Dunn M."/>
            <person name="Earthrowl M.E."/>
            <person name="Ellington A.E."/>
            <person name="Evans K.A."/>
            <person name="Faulkner L."/>
            <person name="Francis M.D."/>
            <person name="Frankish A."/>
            <person name="Frankland J."/>
            <person name="French L."/>
            <person name="Garner P."/>
            <person name="Garnett J."/>
            <person name="Ghori M.J."/>
            <person name="Gilby L.M."/>
            <person name="Gillson C.J."/>
            <person name="Glithero R.J."/>
            <person name="Grafham D.V."/>
            <person name="Grant M."/>
            <person name="Gribble S."/>
            <person name="Griffiths C."/>
            <person name="Griffiths M.N.D."/>
            <person name="Hall R."/>
            <person name="Halls K.S."/>
            <person name="Hammond S."/>
            <person name="Harley J.L."/>
            <person name="Hart E.A."/>
            <person name="Heath P.D."/>
            <person name="Heathcott R."/>
            <person name="Holmes S.J."/>
            <person name="Howden P.J."/>
            <person name="Howe K.L."/>
            <person name="Howell G.R."/>
            <person name="Huckle E."/>
            <person name="Humphray S.J."/>
            <person name="Humphries M.D."/>
            <person name="Hunt A.R."/>
            <person name="Johnson C.M."/>
            <person name="Joy A.A."/>
            <person name="Kay M."/>
            <person name="Keenan S.J."/>
            <person name="Kimberley A.M."/>
            <person name="King A."/>
            <person name="Laird G.K."/>
            <person name="Langford C."/>
            <person name="Lawlor S."/>
            <person name="Leongamornlert D.A."/>
            <person name="Leversha M."/>
            <person name="Lloyd C.R."/>
            <person name="Lloyd D.M."/>
            <person name="Loveland J.E."/>
            <person name="Lovell J."/>
            <person name="Martin S."/>
            <person name="Mashreghi-Mohammadi M."/>
            <person name="Maslen G.L."/>
            <person name="Matthews L."/>
            <person name="McCann O.T."/>
            <person name="McLaren S.J."/>
            <person name="McLay K."/>
            <person name="McMurray A."/>
            <person name="Moore M.J.F."/>
            <person name="Mullikin J.C."/>
            <person name="Niblett D."/>
            <person name="Nickerson T."/>
            <person name="Novik K.L."/>
            <person name="Oliver K."/>
            <person name="Overton-Larty E.K."/>
            <person name="Parker A."/>
            <person name="Patel R."/>
            <person name="Pearce A.V."/>
            <person name="Peck A.I."/>
            <person name="Phillimore B.J.C.T."/>
            <person name="Phillips S."/>
            <person name="Plumb R.W."/>
            <person name="Porter K.M."/>
            <person name="Ramsey Y."/>
            <person name="Ranby S.A."/>
            <person name="Rice C.M."/>
            <person name="Ross M.T."/>
            <person name="Searle S.M."/>
            <person name="Sehra H.K."/>
            <person name="Sheridan E."/>
            <person name="Skuce C.D."/>
            <person name="Smith S."/>
            <person name="Smith M."/>
            <person name="Spraggon L."/>
            <person name="Squares S.L."/>
            <person name="Steward C.A."/>
            <person name="Sycamore N."/>
            <person name="Tamlyn-Hall G."/>
            <person name="Tester J."/>
            <person name="Theaker A.J."/>
            <person name="Thomas D.W."/>
            <person name="Thorpe A."/>
            <person name="Tracey A."/>
            <person name="Tromans A."/>
            <person name="Tubby B."/>
            <person name="Wall M."/>
            <person name="Wallis J.M."/>
            <person name="West A.P."/>
            <person name="White S.S."/>
            <person name="Whitehead S.L."/>
            <person name="Whittaker H."/>
            <person name="Wild A."/>
            <person name="Willey D.J."/>
            <person name="Wilmer T.E."/>
            <person name="Wood J.M."/>
            <person name="Wray P.W."/>
            <person name="Wyatt J.C."/>
            <person name="Young L."/>
            <person name="Younger R.M."/>
            <person name="Bentley D.R."/>
            <person name="Coulson A."/>
            <person name="Durbin R.M."/>
            <person name="Hubbard T."/>
            <person name="Sulston J.E."/>
            <person name="Dunham I."/>
            <person name="Rogers J."/>
            <person name="Beck S."/>
        </authorList>
    </citation>
    <scope>NUCLEOTIDE SEQUENCE [LARGE SCALE GENOMIC DNA]</scope>
    <scope>VARIANTS HIS-77 AND LYS-149</scope>
</reference>
<reference key="5">
    <citation type="submission" date="2005-07" db="EMBL/GenBank/DDBJ databases">
        <authorList>
            <person name="Mural R.J."/>
            <person name="Istrail S."/>
            <person name="Sutton G.G."/>
            <person name="Florea L."/>
            <person name="Halpern A.L."/>
            <person name="Mobarry C.M."/>
            <person name="Lippert R."/>
            <person name="Walenz B."/>
            <person name="Shatkay H."/>
            <person name="Dew I."/>
            <person name="Miller J.R."/>
            <person name="Flanigan M.J."/>
            <person name="Edwards N.J."/>
            <person name="Bolanos R."/>
            <person name="Fasulo D."/>
            <person name="Halldorsson B.V."/>
            <person name="Hannenhalli S."/>
            <person name="Turner R."/>
            <person name="Yooseph S."/>
            <person name="Lu F."/>
            <person name="Nusskern D.R."/>
            <person name="Shue B.C."/>
            <person name="Zheng X.H."/>
            <person name="Zhong F."/>
            <person name="Delcher A.L."/>
            <person name="Huson D.H."/>
            <person name="Kravitz S.A."/>
            <person name="Mouchard L."/>
            <person name="Reinert K."/>
            <person name="Remington K.A."/>
            <person name="Clark A.G."/>
            <person name="Waterman M.S."/>
            <person name="Eichler E.E."/>
            <person name="Adams M.D."/>
            <person name="Hunkapiller M.W."/>
            <person name="Myers E.W."/>
            <person name="Venter J.C."/>
        </authorList>
    </citation>
    <scope>NUCLEOTIDE SEQUENCE [LARGE SCALE GENOMIC DNA]</scope>
</reference>
<reference key="6">
    <citation type="journal article" date="2004" name="Genome Res.">
        <title>The status, quality, and expansion of the NIH full-length cDNA project: the Mammalian Gene Collection (MGC).</title>
        <authorList>
            <consortium name="The MGC Project Team"/>
        </authorList>
    </citation>
    <scope>NUCLEOTIDE SEQUENCE [LARGE SCALE MRNA] (ISOFORMS 1 AND 4)</scope>
    <scope>VARIANT HIS-77</scope>
    <source>
        <tissue>Hypothalamus</tissue>
        <tissue>Skin</tissue>
    </source>
</reference>
<reference key="7">
    <citation type="journal article" date="2006" name="RNA">
        <title>Differential association of protein subunits with the human RNase MRP and RNase P complexes.</title>
        <authorList>
            <person name="Welting T.J."/>
            <person name="Kikkert B.J."/>
            <person name="van Venrooij W.J."/>
            <person name="Pruijn G.J."/>
        </authorList>
    </citation>
    <scope>IDENTIFICATION IN RNASE P COMPLEX</scope>
    <scope>SUBUNIT</scope>
</reference>
<reference key="8">
    <citation type="journal article" date="2012" name="Proc. Natl. Acad. Sci. U.S.A.">
        <title>N-terminal acetylome analyses and functional insights of the N-terminal acetyltransferase NatB.</title>
        <authorList>
            <person name="Van Damme P."/>
            <person name="Lasa M."/>
            <person name="Polevoda B."/>
            <person name="Gazquez C."/>
            <person name="Elosegui-Artola A."/>
            <person name="Kim D.S."/>
            <person name="De Juan-Pardo E."/>
            <person name="Demeyer K."/>
            <person name="Hole K."/>
            <person name="Larrea E."/>
            <person name="Timmerman E."/>
            <person name="Prieto J."/>
            <person name="Arnesen T."/>
            <person name="Sherman F."/>
            <person name="Gevaert K."/>
            <person name="Aldabe R."/>
        </authorList>
    </citation>
    <scope>ACETYLATION [LARGE SCALE ANALYSIS] AT ALA-2</scope>
    <scope>CLEAVAGE OF INITIATOR METHIONINE [LARGE SCALE ANALYSIS]</scope>
    <scope>IDENTIFICATION BY MASS SPECTROMETRY [LARGE SCALE ANALYSIS]</scope>
</reference>
<reference evidence="12 13" key="9">
    <citation type="journal article" date="2018" name="Cell">
        <title>Cryo-EM Structure of the Human Ribonuclease P Holoenzyme.</title>
        <authorList>
            <person name="Wu J."/>
            <person name="Niu S."/>
            <person name="Tan M."/>
            <person name="Huang C."/>
            <person name="Li M."/>
            <person name="Song Y."/>
            <person name="Wang Q."/>
            <person name="Chen J."/>
            <person name="Shi S."/>
            <person name="Lan P."/>
            <person name="Lei M."/>
        </authorList>
    </citation>
    <scope>STRUCTURE BY ELECTRON MICROSCOPY (3.66 ANGSTROMS) OF RNASE P HOLOENZYME IN COMPLEX WITH TRNA</scope>
    <scope>FUNCTION</scope>
    <scope>SUBUNIT</scope>
</reference>
<dbReference type="EMBL" id="AF212152">
    <property type="protein sequence ID" value="AAK39955.2"/>
    <property type="molecule type" value="mRNA"/>
</dbReference>
<dbReference type="EMBL" id="AJ504713">
    <property type="protein sequence ID" value="CAD44289.1"/>
    <property type="molecule type" value="mRNA"/>
</dbReference>
<dbReference type="EMBL" id="AJ504714">
    <property type="protein sequence ID" value="CAD44290.1"/>
    <property type="molecule type" value="mRNA"/>
</dbReference>
<dbReference type="EMBL" id="AJ504715">
    <property type="protein sequence ID" value="CAD44291.1"/>
    <property type="molecule type" value="mRNA"/>
</dbReference>
<dbReference type="EMBL" id="AJ504716">
    <property type="protein sequence ID" value="CAD44292.1"/>
    <property type="molecule type" value="mRNA"/>
</dbReference>
<dbReference type="EMBL" id="AK026291">
    <property type="protein sequence ID" value="BAB15433.1"/>
    <property type="molecule type" value="mRNA"/>
</dbReference>
<dbReference type="EMBL" id="AL662832">
    <property type="status" value="NOT_ANNOTATED_CDS"/>
    <property type="molecule type" value="Genomic_DNA"/>
</dbReference>
<dbReference type="EMBL" id="AL662795">
    <property type="status" value="NOT_ANNOTATED_CDS"/>
    <property type="molecule type" value="Genomic_DNA"/>
</dbReference>
<dbReference type="EMBL" id="AL773535">
    <property type="status" value="NOT_ANNOTATED_CDS"/>
    <property type="molecule type" value="Genomic_DNA"/>
</dbReference>
<dbReference type="EMBL" id="BX294158">
    <property type="status" value="NOT_ANNOTATED_CDS"/>
    <property type="molecule type" value="Genomic_DNA"/>
</dbReference>
<dbReference type="EMBL" id="CR759928">
    <property type="status" value="NOT_ANNOTATED_CDS"/>
    <property type="molecule type" value="Genomic_DNA"/>
</dbReference>
<dbReference type="EMBL" id="BX927214">
    <property type="status" value="NOT_ANNOTATED_CDS"/>
    <property type="molecule type" value="Genomic_DNA"/>
</dbReference>
<dbReference type="EMBL" id="CR759281">
    <property type="status" value="NOT_ANNOTATED_CDS"/>
    <property type="molecule type" value="Genomic_DNA"/>
</dbReference>
<dbReference type="EMBL" id="CH471081">
    <property type="protein sequence ID" value="EAX03287.1"/>
    <property type="molecule type" value="Genomic_DNA"/>
</dbReference>
<dbReference type="EMBL" id="CH471081">
    <property type="protein sequence ID" value="EAX03288.1"/>
    <property type="molecule type" value="Genomic_DNA"/>
</dbReference>
<dbReference type="EMBL" id="CH471081">
    <property type="protein sequence ID" value="EAX03289.1"/>
    <property type="molecule type" value="Genomic_DNA"/>
</dbReference>
<dbReference type="EMBL" id="BC011730">
    <property type="protein sequence ID" value="AAH11730.1"/>
    <property type="molecule type" value="mRNA"/>
</dbReference>
<dbReference type="EMBL" id="BI598757">
    <property type="status" value="NOT_ANNOTATED_CDS"/>
    <property type="molecule type" value="mRNA"/>
</dbReference>
<dbReference type="CCDS" id="CCDS4679.1">
    <molecule id="Q9H633-1"/>
</dbReference>
<dbReference type="CCDS" id="CCDS56409.1">
    <molecule id="Q9H633-4"/>
</dbReference>
<dbReference type="CCDS" id="CCDS56410.1">
    <molecule id="Q9H633-3"/>
</dbReference>
<dbReference type="RefSeq" id="NP_001186049.1">
    <molecule id="Q9H633-4"/>
    <property type="nucleotide sequence ID" value="NM_001199120.3"/>
</dbReference>
<dbReference type="RefSeq" id="NP_001186050.1">
    <molecule id="Q9H633-3"/>
    <property type="nucleotide sequence ID" value="NM_001199121.3"/>
</dbReference>
<dbReference type="RefSeq" id="NP_079115.1">
    <molecule id="Q9H633-1"/>
    <property type="nucleotide sequence ID" value="NM_024839.4"/>
</dbReference>
<dbReference type="PDB" id="6AHR">
    <property type="method" value="EM"/>
    <property type="resolution" value="3.92 A"/>
    <property type="chains" value="K=1-154"/>
</dbReference>
<dbReference type="PDB" id="6AHU">
    <property type="method" value="EM"/>
    <property type="resolution" value="3.66 A"/>
    <property type="chains" value="K=1-154"/>
</dbReference>
<dbReference type="PDBsum" id="6AHR"/>
<dbReference type="PDBsum" id="6AHU"/>
<dbReference type="EMDB" id="EMD-9626"/>
<dbReference type="EMDB" id="EMD-9627"/>
<dbReference type="SMR" id="Q9H633"/>
<dbReference type="BioGRID" id="122981">
    <property type="interactions" value="28"/>
</dbReference>
<dbReference type="ComplexPortal" id="CPX-2877">
    <property type="entry name" value="Nucleolar ribonuclease P complex"/>
</dbReference>
<dbReference type="CORUM" id="Q9H633"/>
<dbReference type="FunCoup" id="Q9H633">
    <property type="interactions" value="29"/>
</dbReference>
<dbReference type="IntAct" id="Q9H633">
    <property type="interactions" value="19"/>
</dbReference>
<dbReference type="STRING" id="9606.ENSP00000409799"/>
<dbReference type="iPTMnet" id="Q9H633"/>
<dbReference type="PhosphoSitePlus" id="Q9H633"/>
<dbReference type="BioMuta" id="RPP21"/>
<dbReference type="DMDM" id="52001252"/>
<dbReference type="jPOST" id="Q9H633"/>
<dbReference type="MassIVE" id="Q9H633"/>
<dbReference type="PaxDb" id="9606-ENSP00000409799"/>
<dbReference type="PeptideAtlas" id="Q9H633"/>
<dbReference type="ProteomicsDB" id="63919"/>
<dbReference type="ProteomicsDB" id="80953">
    <molecule id="Q9H633-1"/>
</dbReference>
<dbReference type="ProteomicsDB" id="80954">
    <molecule id="Q9H633-2"/>
</dbReference>
<dbReference type="ProteomicsDB" id="80955">
    <molecule id="Q9H633-3"/>
</dbReference>
<dbReference type="Pumba" id="Q9H633"/>
<dbReference type="Antibodypedia" id="34965">
    <property type="antibodies" value="53 antibodies from 14 providers"/>
</dbReference>
<dbReference type="DNASU" id="79897"/>
<dbReference type="Ensembl" id="ENST00000376642.8">
    <molecule id="Q9H633-1"/>
    <property type="protein sequence ID" value="ENSP00000365829.4"/>
    <property type="gene ID" value="ENSG00000239927.6"/>
</dbReference>
<dbReference type="Ensembl" id="ENST00000411784.6">
    <molecule id="Q9H633-2"/>
    <property type="protein sequence ID" value="ENSP00000412619.2"/>
    <property type="gene ID" value="ENSG00000241863.6"/>
</dbReference>
<dbReference type="Ensembl" id="ENST00000414187.6">
    <property type="protein sequence ID" value="ENSP00000398396.2"/>
    <property type="gene ID" value="ENSG00000243009.6"/>
</dbReference>
<dbReference type="Ensembl" id="ENST00000415583.6">
    <molecule id="Q9H633-3"/>
    <property type="protein sequence ID" value="ENSP00000403747.2"/>
    <property type="gene ID" value="ENSG00000239927.6"/>
</dbReference>
<dbReference type="Ensembl" id="ENST00000416977.6">
    <property type="protein sequence ID" value="ENSP00000404312.2"/>
    <property type="gene ID" value="ENSG00000241779.6"/>
</dbReference>
<dbReference type="Ensembl" id="ENST00000424616.6">
    <molecule id="Q9H633-1"/>
    <property type="protein sequence ID" value="ENSP00000399295.2"/>
    <property type="gene ID" value="ENSG00000241863.6"/>
</dbReference>
<dbReference type="Ensembl" id="ENST00000425575.2">
    <molecule id="Q9H633-4"/>
    <property type="protein sequence ID" value="ENSP00000405834.2"/>
    <property type="gene ID" value="ENSG00000239927.6"/>
</dbReference>
<dbReference type="Ensembl" id="ENST00000428040.6">
    <molecule id="Q9H633-2"/>
    <property type="protein sequence ID" value="ENSP00000394320.2"/>
    <property type="gene ID" value="ENSG00000241370.6"/>
</dbReference>
<dbReference type="Ensembl" id="ENST00000430900.6">
    <molecule id="Q9H633-2"/>
    <property type="protein sequence ID" value="ENSP00000415046.2"/>
    <property type="gene ID" value="ENSG00000239927.6"/>
</dbReference>
<dbReference type="Ensembl" id="ENST00000433076.6">
    <molecule id="Q9H633-4"/>
    <property type="protein sequence ID" value="ENSP00000409799.2"/>
    <property type="gene ID" value="ENSG00000241370.6"/>
</dbReference>
<dbReference type="Ensembl" id="ENST00000434282.6">
    <property type="protein sequence ID" value="ENSP00000414284.2"/>
    <property type="gene ID" value="ENSG00000242726.6"/>
</dbReference>
<dbReference type="Ensembl" id="ENST00000435318.2">
    <molecule id="Q9H633-3"/>
    <property type="protein sequence ID" value="ENSP00000411003.2"/>
    <property type="gene ID" value="ENSG00000239865.6"/>
</dbReference>
<dbReference type="Ensembl" id="ENST00000436442.2">
    <molecule id="Q9H633-3"/>
    <property type="protein sequence ID" value="ENSP00000397778.2"/>
    <property type="gene ID" value="ENSG00000241370.6"/>
</dbReference>
<dbReference type="Ensembl" id="ENST00000437470.2">
    <molecule id="Q9H633-3"/>
    <property type="protein sequence ID" value="ENSP00000408610.2"/>
    <property type="gene ID" value="ENSG00000241863.6"/>
</dbReference>
<dbReference type="Ensembl" id="ENST00000442966.7">
    <molecule id="Q9H633-1"/>
    <property type="protein sequence ID" value="ENSP00000403833.2"/>
    <property type="gene ID" value="ENSG00000241370.6"/>
</dbReference>
<dbReference type="Ensembl" id="ENST00000455025.6">
    <molecule id="Q9H633-4"/>
    <property type="protein sequence ID" value="ENSP00000409193.2"/>
    <property type="gene ID" value="ENSG00000241863.6"/>
</dbReference>
<dbReference type="GeneID" id="79897"/>
<dbReference type="KEGG" id="hsa:79897"/>
<dbReference type="MANE-Select" id="ENST00000442966.7">
    <property type="protein sequence ID" value="ENSP00000403833.2"/>
    <property type="RefSeq nucleotide sequence ID" value="NM_024839.4"/>
    <property type="RefSeq protein sequence ID" value="NP_079115.1"/>
</dbReference>
<dbReference type="UCSC" id="uc003nqd.3">
    <molecule id="Q9H633-1"/>
    <property type="organism name" value="human"/>
</dbReference>
<dbReference type="AGR" id="HGNC:21300"/>
<dbReference type="CTD" id="79897"/>
<dbReference type="DisGeNET" id="79897"/>
<dbReference type="GeneCards" id="RPP21"/>
<dbReference type="HGNC" id="HGNC:21300">
    <property type="gene designation" value="RPP21"/>
</dbReference>
<dbReference type="HPA" id="ENSG00000241370">
    <property type="expression patterns" value="Low tissue specificity"/>
</dbReference>
<dbReference type="MIM" id="612524">
    <property type="type" value="gene"/>
</dbReference>
<dbReference type="neXtProt" id="NX_Q9H633"/>
<dbReference type="OpenTargets" id="ENSG00000241370"/>
<dbReference type="PharmGKB" id="PA134960979"/>
<dbReference type="VEuPathDB" id="HostDB:ENSG00000241370"/>
<dbReference type="eggNOG" id="KOG4394">
    <property type="taxonomic scope" value="Eukaryota"/>
</dbReference>
<dbReference type="GeneTree" id="ENSGT00390000003020"/>
<dbReference type="HOGENOM" id="CLU_079140_2_1_1"/>
<dbReference type="InParanoid" id="Q9H633"/>
<dbReference type="OMA" id="DPKHLLW"/>
<dbReference type="OrthoDB" id="128536at2759"/>
<dbReference type="PAN-GO" id="Q9H633">
    <property type="GO annotations" value="2 GO annotations based on evolutionary models"/>
</dbReference>
<dbReference type="PhylomeDB" id="Q9H633"/>
<dbReference type="BRENDA" id="3.1.26.5">
    <property type="organism ID" value="2681"/>
</dbReference>
<dbReference type="PathwayCommons" id="Q9H633"/>
<dbReference type="Reactome" id="R-HSA-6784531">
    <property type="pathway name" value="tRNA processing in the nucleus"/>
</dbReference>
<dbReference type="Reactome" id="R-HSA-6791226">
    <property type="pathway name" value="Major pathway of rRNA processing in the nucleolus and cytosol"/>
</dbReference>
<dbReference type="SignaLink" id="Q9H633"/>
<dbReference type="BioGRID-ORCS" id="79897">
    <property type="hits" value="741 hits in 1134 CRISPR screens"/>
</dbReference>
<dbReference type="CD-CODE" id="6F24707C">
    <property type="entry name" value="Cajal body"/>
</dbReference>
<dbReference type="CD-CODE" id="91857CE7">
    <property type="entry name" value="Nucleolus"/>
</dbReference>
<dbReference type="GenomeRNAi" id="79897"/>
<dbReference type="Pharos" id="Q9H633">
    <property type="development level" value="Tbio"/>
</dbReference>
<dbReference type="PRO" id="PR:Q9H633"/>
<dbReference type="Proteomes" id="UP000005640">
    <property type="component" value="Chromosome 6"/>
</dbReference>
<dbReference type="RNAct" id="Q9H633">
    <property type="molecule type" value="protein"/>
</dbReference>
<dbReference type="Bgee" id="ENSG00000241370">
    <property type="expression patterns" value="Expressed in muscle layer of sigmoid colon and 99 other cell types or tissues"/>
</dbReference>
<dbReference type="ExpressionAtlas" id="Q9H633">
    <property type="expression patterns" value="baseline and differential"/>
</dbReference>
<dbReference type="GO" id="GO:0030681">
    <property type="term" value="C:multimeric ribonuclease P complex"/>
    <property type="evidence" value="ECO:0000314"/>
    <property type="project" value="UniProtKB"/>
</dbReference>
<dbReference type="GO" id="GO:0005655">
    <property type="term" value="C:nucleolar ribonuclease P complex"/>
    <property type="evidence" value="ECO:0000318"/>
    <property type="project" value="GO_Central"/>
</dbReference>
<dbReference type="GO" id="GO:0005654">
    <property type="term" value="C:nucleoplasm"/>
    <property type="evidence" value="ECO:0000304"/>
    <property type="project" value="Reactome"/>
</dbReference>
<dbReference type="GO" id="GO:0046872">
    <property type="term" value="F:metal ion binding"/>
    <property type="evidence" value="ECO:0007669"/>
    <property type="project" value="UniProtKB-KW"/>
</dbReference>
<dbReference type="GO" id="GO:0004526">
    <property type="term" value="F:ribonuclease P activity"/>
    <property type="evidence" value="ECO:0007669"/>
    <property type="project" value="UniProtKB-EC"/>
</dbReference>
<dbReference type="GO" id="GO:0033204">
    <property type="term" value="F:ribonuclease P RNA binding"/>
    <property type="evidence" value="ECO:0000314"/>
    <property type="project" value="UniProtKB"/>
</dbReference>
<dbReference type="GO" id="GO:0009410">
    <property type="term" value="P:response to xenobiotic stimulus"/>
    <property type="evidence" value="ECO:0000270"/>
    <property type="project" value="UniProtKB"/>
</dbReference>
<dbReference type="GO" id="GO:0001682">
    <property type="term" value="P:tRNA 5'-leader removal"/>
    <property type="evidence" value="ECO:0000314"/>
    <property type="project" value="UniProtKB"/>
</dbReference>
<dbReference type="GO" id="GO:0008033">
    <property type="term" value="P:tRNA processing"/>
    <property type="evidence" value="ECO:0000318"/>
    <property type="project" value="GO_Central"/>
</dbReference>
<dbReference type="Gene3D" id="6.20.50.20">
    <property type="match status" value="1"/>
</dbReference>
<dbReference type="InterPro" id="IPR007175">
    <property type="entry name" value="Rpr2/Snm1/Rpp21"/>
</dbReference>
<dbReference type="PANTHER" id="PTHR14742:SF0">
    <property type="entry name" value="RIBONUCLEASE P PROTEIN SUBUNIT P21"/>
    <property type="match status" value="1"/>
</dbReference>
<dbReference type="PANTHER" id="PTHR14742">
    <property type="entry name" value="RIBONUCLEASE P SUBUNIT P21"/>
    <property type="match status" value="1"/>
</dbReference>
<dbReference type="Pfam" id="PF04032">
    <property type="entry name" value="Rpr2"/>
    <property type="match status" value="1"/>
</dbReference>
<comment type="function">
    <text evidence="7">Component of ribonuclease P, a ribonucleoprotein complex that generates mature tRNA molecules by cleaving their 5'-ends.</text>
</comment>
<comment type="subunit">
    <text evidence="6 7">RNase P consists of a catalytic RNA moiety and about 10 protein subunits; POP1, POP4, POP5, POP7, RPP14, RPP21, RPP25, RPP30, RPP38 and RPP40 (PubMed:16723659, PubMed:30454648). Within the RNase P complex, POP1, POP7 and RPP25 form the 'finger' subcomplex, POP5, RPP14, RPP40 and homodimeric RPP30 form the 'palm' subcomplex, and RPP21, POP4 and RPP38 form the 'wrist' subcomplex. All subunits of the RNase P complex interact with the catalytic RNA (PubMed:30454648).</text>
</comment>
<comment type="interaction">
    <interactant intactId="EBI-366586">
        <id>Q9H633</id>
    </interactant>
    <interactant intactId="EBI-366505">
        <id>O75818</id>
        <label>RPP40</label>
    </interactant>
    <organismsDiffer>false</organismsDiffer>
    <experiments>4</experiments>
</comment>
<comment type="subcellular location">
    <subcellularLocation>
        <location evidence="3">Nucleus</location>
        <location evidence="3">Nucleolus</location>
    </subcellularLocation>
</comment>
<comment type="alternative products">
    <event type="alternative splicing"/>
    <isoform>
        <id>Q9H633-1</id>
        <name>1</name>
        <name>CAT60-V1</name>
        <sequence type="displayed"/>
    </isoform>
    <isoform>
        <id>Q9H633-2</id>
        <name>2</name>
        <name>CAT60-V3</name>
        <sequence type="described" ref="VSP_010695"/>
    </isoform>
    <isoform>
        <id>Q9H633-3</id>
        <name>3</name>
        <name>CAT60-V4</name>
        <sequence type="described" ref="VSP_010696"/>
    </isoform>
    <isoform>
        <id>Q9H633-4</id>
        <name>4</name>
        <sequence type="described" ref="VSP_044901"/>
    </isoform>
</comment>
<comment type="similarity">
    <text evidence="11">Belongs to the eukaryotic/archaeal RNase P protein component 4 family.</text>
</comment>
<comment type="sequence caution" evidence="11">
    <conflict type="erroneous termination">
        <sequence resource="EMBL" id="BI598757"/>
    </conflict>
    <text>Extended C-terminus.</text>
</comment>
<proteinExistence type="evidence at protein level"/>
<sequence length="154" mass="17570">MAGPVKDREAFQRLNFLYQAAHCVLAQDPENQALARFYCYTERTIAKRLVLRRDPSVKRTLCRGCSSLLVPGLTCTQRQRRCRGQRWTVQTCLTCQRSQRFLNDPGHLLWGDRPEAQLGSQADSKPLQPLPNTAHSISDRLPEEKMQTQGSSNQ</sequence>
<organism>
    <name type="scientific">Homo sapiens</name>
    <name type="common">Human</name>
    <dbReference type="NCBI Taxonomy" id="9606"/>
    <lineage>
        <taxon>Eukaryota</taxon>
        <taxon>Metazoa</taxon>
        <taxon>Chordata</taxon>
        <taxon>Craniata</taxon>
        <taxon>Vertebrata</taxon>
        <taxon>Euteleostomi</taxon>
        <taxon>Mammalia</taxon>
        <taxon>Eutheria</taxon>
        <taxon>Euarchontoglires</taxon>
        <taxon>Primates</taxon>
        <taxon>Haplorrhini</taxon>
        <taxon>Catarrhini</taxon>
        <taxon>Hominidae</taxon>
        <taxon>Homo</taxon>
    </lineage>
</organism>
<protein>
    <recommendedName>
        <fullName>Ribonuclease P protein subunit p21</fullName>
        <shortName>RNaseP protein p21</shortName>
    </recommendedName>
    <alternativeName>
        <fullName>Ribonuclease P/MRP 21 kDa subunit</fullName>
    </alternativeName>
    <alternativeName>
        <fullName>Ribonucleoprotein V</fullName>
    </alternativeName>
</protein>
<evidence type="ECO:0000250" key="1"/>
<evidence type="ECO:0000256" key="2">
    <source>
        <dbReference type="SAM" id="MobiDB-lite"/>
    </source>
</evidence>
<evidence type="ECO:0000269" key="3">
    <source>
    </source>
</evidence>
<evidence type="ECO:0000269" key="4">
    <source>
    </source>
</evidence>
<evidence type="ECO:0000269" key="5">
    <source>
    </source>
</evidence>
<evidence type="ECO:0000269" key="6">
    <source>
    </source>
</evidence>
<evidence type="ECO:0000269" key="7">
    <source>
    </source>
</evidence>
<evidence type="ECO:0000269" key="8">
    <source ref="2"/>
</evidence>
<evidence type="ECO:0000303" key="9">
    <source>
    </source>
</evidence>
<evidence type="ECO:0000303" key="10">
    <source ref="2"/>
</evidence>
<evidence type="ECO:0000305" key="11"/>
<evidence type="ECO:0007744" key="12">
    <source>
        <dbReference type="PDB" id="6AHR"/>
    </source>
</evidence>
<evidence type="ECO:0007744" key="13">
    <source>
        <dbReference type="PDB" id="6AHU"/>
    </source>
</evidence>
<evidence type="ECO:0007744" key="14">
    <source>
    </source>
</evidence>
<keyword id="KW-0002">3D-structure</keyword>
<keyword id="KW-0007">Acetylation</keyword>
<keyword id="KW-0025">Alternative splicing</keyword>
<keyword id="KW-0479">Metal-binding</keyword>
<keyword id="KW-0539">Nucleus</keyword>
<keyword id="KW-1267">Proteomics identification</keyword>
<keyword id="KW-1185">Reference proteome</keyword>
<keyword id="KW-0694">RNA-binding</keyword>
<keyword id="KW-0819">tRNA processing</keyword>
<keyword id="KW-0862">Zinc</keyword>
<accession>Q9H633</accession>
<accession>A2AAZ8</accession>
<accession>B0S834</accession>
<accession>B0S835</accession>
<accession>Q5JPL9</accession>
<accession>Q5JPM1</accession>
<accession>Q5STF8</accession>
<accession>Q5STF9</accession>
<accession>Q5STG2</accession>
<accession>Q5SU41</accession>
<accession>Q5SU42</accession>
<accession>Q86Y49</accession>
<accession>Q86Y50</accession>
<accession>Q86Y51</accession>
<accession>Q96F16</accession>
<gene>
    <name type="primary">RPP21</name>
    <name type="synonym">C6orf135</name>
    <name type="synonym">CAT60</name>
</gene>
<feature type="initiator methionine" description="Removed" evidence="14">
    <location>
        <position position="1"/>
    </location>
</feature>
<feature type="chain" id="PRO_0000153845" description="Ribonuclease P protein subunit p21">
    <location>
        <begin position="2"/>
        <end position="154"/>
    </location>
</feature>
<feature type="region of interest" description="Disordered" evidence="2">
    <location>
        <begin position="117"/>
        <end position="154"/>
    </location>
</feature>
<feature type="compositionally biased region" description="Basic and acidic residues" evidence="2">
    <location>
        <begin position="137"/>
        <end position="146"/>
    </location>
</feature>
<feature type="binding site" evidence="1">
    <location>
        <position position="62"/>
    </location>
    <ligand>
        <name>Zn(2+)</name>
        <dbReference type="ChEBI" id="CHEBI:29105"/>
    </ligand>
</feature>
<feature type="binding site" evidence="1">
    <location>
        <position position="65"/>
    </location>
    <ligand>
        <name>Zn(2+)</name>
        <dbReference type="ChEBI" id="CHEBI:29105"/>
    </ligand>
</feature>
<feature type="binding site" evidence="1">
    <location>
        <position position="92"/>
    </location>
    <ligand>
        <name>Zn(2+)</name>
        <dbReference type="ChEBI" id="CHEBI:29105"/>
    </ligand>
</feature>
<feature type="binding site" evidence="1">
    <location>
        <position position="95"/>
    </location>
    <ligand>
        <name>Zn(2+)</name>
        <dbReference type="ChEBI" id="CHEBI:29105"/>
    </ligand>
</feature>
<feature type="modified residue" description="N-acetylalanine" evidence="14">
    <location>
        <position position="2"/>
    </location>
</feature>
<feature type="splice variant" id="VSP_010695" description="In isoform 2." evidence="10">
    <original>Q</original>
    <variation>QVSLRQGPHGDGARRPRVTAPLPQ</variation>
    <location>
        <position position="19"/>
    </location>
</feature>
<feature type="splice variant" id="VSP_044901" description="In isoform 4." evidence="9">
    <original>R</original>
    <variation>RRPLSSSAP</variation>
    <location>
        <position position="52"/>
    </location>
</feature>
<feature type="splice variant" id="VSP_010696" description="In isoform 3." evidence="10">
    <original>DSKPLQPLPNTAHSISDRLPEEKMQTQGSSNQ</original>
    <variation>GERFQTTTTLAKHSPLHFRPPS</variation>
    <location>
        <begin position="123"/>
        <end position="154"/>
    </location>
</feature>
<feature type="sequence variant" id="VAR_019116" description="In dbSNP:rs6986." evidence="4 5 8">
    <original>Q</original>
    <variation>H</variation>
    <location>
        <position position="77"/>
    </location>
</feature>
<feature type="sequence variant" id="VAR_045986" description="In dbSNP:rs974963." evidence="4">
    <original>Q</original>
    <variation>K</variation>
    <location>
        <position position="149"/>
    </location>
</feature>
<feature type="sequence conflict" description="In Ref. 6; BI598757." evidence="11" ref="6">
    <original>E</original>
    <variation>K</variation>
    <location>
        <position position="9"/>
    </location>
</feature>
<feature type="sequence conflict" description="In Ref. 2; CAD44290." evidence="11" ref="2">
    <original>R</original>
    <variation>Q</variation>
    <location>
        <position position="113"/>
    </location>
</feature>